<keyword id="KW-0025">Alternative splicing</keyword>
<keyword id="KW-0256">Endoplasmic reticulum</keyword>
<keyword id="KW-0325">Glycoprotein</keyword>
<keyword id="KW-0328">Glycosyltransferase</keyword>
<keyword id="KW-0443">Lipid metabolism</keyword>
<keyword id="KW-0472">Membrane</keyword>
<keyword id="KW-1267">Proteomics identification</keyword>
<keyword id="KW-1185">Reference proteome</keyword>
<keyword id="KW-0732">Signal</keyword>
<keyword id="KW-0808">Transferase</keyword>
<keyword id="KW-0812">Transmembrane</keyword>
<keyword id="KW-1133">Transmembrane helix</keyword>
<proteinExistence type="evidence at protein level"/>
<comment type="function">
    <molecule>Isoform 1</molecule>
    <text evidence="4 5 7 8 9 10 12 13 14 15">UDP-glucuronosyltransferase (UGT) that catalyzes phase II biotransformation reactions in which lipophilic substrates are conjugated with glucuronic acid to increase the metabolite's water solubility, thereby facilitating excretion into either the urine or bile (PubMed:12181437, PubMed:15470161, PubMed:18004212, PubMed:18052087, PubMed:18674515, PubMed:18719240, PubMed:20610558, PubMed:23360619, PubMed:21422672, PubMed:38211441). Essential for the elimination and detoxification of drugs, xenobiotics and endogenous compounds (PubMed:12181437, PubMed:18004212). Catalyzes the glucuronidation of endogenous estrogen hormone epiestradiol (PubMed:18719240). Involved in the glucuronidation of F2-isoprostane (5-epi-5-F2t-IsoP) (PubMed:38211441). Involved in the glucuronidation of the phytochemical ferulic acid at the carboxylic acid group (PubMed:21422672). Also catalyzes the glucuronidation of the isoflavones genistein, daidzein, glycitein, formononetin, biochanin A and prunetin, which are phytoestrogens with anticancer and cardiovascular properties (PubMed:18052087). Involved in the glucuronidation of the AGTR1 angiotensin receptor antagonist caderastan, a drug which can inhibit the effect of angiotensin II (PubMed:18674515). Involved in the biotransformation of 7-ethyl-10-hydroxycamptothecin (SN-38), the pharmacologically active metabolite of the anticancer drug irinotecan (PubMed:12181437, PubMed:18004212, PubMed:20610558, PubMed:23360619). Also metabolizes mycophenolate, an immunosuppressive agent (PubMed:15470161).</text>
</comment>
<comment type="function">
    <molecule>Isoform 2</molecule>
    <text evidence="7 12 14">Lacks UGT glucuronidation activity but acts as a negative regulator of isoform 1.</text>
</comment>
<comment type="catalytic activity">
    <reaction evidence="4 5 7 8 9 10 12 13 14 15">
        <text>glucuronate acceptor + UDP-alpha-D-glucuronate = acceptor beta-D-glucuronoside + UDP + H(+)</text>
        <dbReference type="Rhea" id="RHEA:21032"/>
        <dbReference type="ChEBI" id="CHEBI:15378"/>
        <dbReference type="ChEBI" id="CHEBI:58052"/>
        <dbReference type="ChEBI" id="CHEBI:58223"/>
        <dbReference type="ChEBI" id="CHEBI:132367"/>
        <dbReference type="ChEBI" id="CHEBI:132368"/>
        <dbReference type="EC" id="2.4.1.17"/>
    </reaction>
    <physiologicalReaction direction="left-to-right" evidence="23 24 27 28 29 30 31 32 33">
        <dbReference type="Rhea" id="RHEA:21033"/>
    </physiologicalReaction>
</comment>
<comment type="catalytic activity">
    <reaction evidence="10">
        <text>17alpha-estradiol + UDP-alpha-D-glucuronate = 17alpha-estradiol 3-O-(beta-D-glucuronate) + UDP + H(+)</text>
        <dbReference type="Rhea" id="RHEA:52868"/>
        <dbReference type="ChEBI" id="CHEBI:15378"/>
        <dbReference type="ChEBI" id="CHEBI:17160"/>
        <dbReference type="ChEBI" id="CHEBI:57529"/>
        <dbReference type="ChEBI" id="CHEBI:58052"/>
        <dbReference type="ChEBI" id="CHEBI:58223"/>
    </reaction>
    <physiologicalReaction direction="left-to-right" evidence="29">
        <dbReference type="Rhea" id="RHEA:52869"/>
    </physiologicalReaction>
</comment>
<comment type="catalytic activity">
    <reaction evidence="8">
        <text>prunetin + UDP-alpha-D-glucuronate = prunetin-5-O-beta-D-glucuronide + UDP</text>
        <dbReference type="Rhea" id="RHEA:63612"/>
        <dbReference type="ChEBI" id="CHEBI:58052"/>
        <dbReference type="ChEBI" id="CHEBI:58223"/>
        <dbReference type="ChEBI" id="CHEBI:147403"/>
        <dbReference type="ChEBI" id="CHEBI:147405"/>
    </reaction>
    <physiologicalReaction direction="left-to-right" evidence="27">
        <dbReference type="Rhea" id="RHEA:63613"/>
    </physiologicalReaction>
</comment>
<comment type="catalytic activity">
    <reaction evidence="15">
        <text>5-epi-5-F2t-IsoP + UDP-alpha-D-glucuronate = 5-epi-5-F2t-IsoP-glucuronide + UDP + H(+)</text>
        <dbReference type="Rhea" id="RHEA:79911"/>
        <dbReference type="ChEBI" id="CHEBI:15378"/>
        <dbReference type="ChEBI" id="CHEBI:58052"/>
        <dbReference type="ChEBI" id="CHEBI:58223"/>
        <dbReference type="ChEBI" id="CHEBI:229787"/>
        <dbReference type="ChEBI" id="CHEBI:229788"/>
    </reaction>
    <physiologicalReaction direction="left-to-right" evidence="33">
        <dbReference type="Rhea" id="RHEA:79912"/>
    </physiologicalReaction>
</comment>
<comment type="catalytic activity">
    <reaction evidence="13">
        <text>(E)-ferulate + UDP-alpha-D-glucuronate = (E)-ferulic acid beta-D-glucuronate ester + UDP</text>
        <dbReference type="Rhea" id="RHEA:79955"/>
        <dbReference type="ChEBI" id="CHEBI:29749"/>
        <dbReference type="ChEBI" id="CHEBI:58052"/>
        <dbReference type="ChEBI" id="CHEBI:58223"/>
        <dbReference type="ChEBI" id="CHEBI:231332"/>
    </reaction>
    <physiologicalReaction direction="left-to-right" evidence="31">
        <dbReference type="Rhea" id="RHEA:79956"/>
    </physiologicalReaction>
</comment>
<comment type="catalytic activity">
    <reaction evidence="9">
        <text>candesartan + UDP-alpha-D-glucuronate = candesartan O-beta-D-glucuronoside + UDP</text>
        <dbReference type="Rhea" id="RHEA:63724"/>
        <dbReference type="ChEBI" id="CHEBI:58052"/>
        <dbReference type="ChEBI" id="CHEBI:58223"/>
        <dbReference type="ChEBI" id="CHEBI:149509"/>
        <dbReference type="ChEBI" id="CHEBI:149522"/>
    </reaction>
    <physiologicalReaction direction="left-to-right" evidence="28">
        <dbReference type="Rhea" id="RHEA:63725"/>
    </physiologicalReaction>
</comment>
<comment type="catalytic activity">
    <reaction evidence="4 7 12">
        <text>SN-38 + UDP-alpha-D-glucuronate = SN-38 O-beta-D-glucuronide + UDP + H(+)</text>
        <dbReference type="Rhea" id="RHEA:63696"/>
        <dbReference type="ChEBI" id="CHEBI:8988"/>
        <dbReference type="ChEBI" id="CHEBI:15378"/>
        <dbReference type="ChEBI" id="CHEBI:58052"/>
        <dbReference type="ChEBI" id="CHEBI:58223"/>
        <dbReference type="ChEBI" id="CHEBI:149482"/>
    </reaction>
    <physiologicalReaction direction="left-to-right" evidence="23 26 30">
        <dbReference type="Rhea" id="RHEA:63697"/>
    </physiologicalReaction>
</comment>
<comment type="catalytic activity">
    <reaction evidence="5">
        <text>mycophenolate + UDP-alpha-D-glucuronate = mycophenolate 7-O-beta-D-glucuronide + UDP + H(+)</text>
        <dbReference type="Rhea" id="RHEA:63704"/>
        <dbReference type="ChEBI" id="CHEBI:15378"/>
        <dbReference type="ChEBI" id="CHEBI:58052"/>
        <dbReference type="ChEBI" id="CHEBI:58223"/>
        <dbReference type="ChEBI" id="CHEBI:62932"/>
        <dbReference type="ChEBI" id="CHEBI:149486"/>
    </reaction>
    <physiologicalReaction direction="left-to-right" evidence="24">
        <dbReference type="Rhea" id="RHEA:63705"/>
    </physiologicalReaction>
</comment>
<comment type="biophysicochemical properties">
    <kinetics>
        <KM evidence="10">37.1 uM for 17alpha-estradiol/epiestradiol (when assaying glucuronidation at position 3)</KM>
        <KM evidence="13">6150 uM for (E)-ferulate (when assaying glucuronidation at the carboxylic acid group)</KM>
        <KM evidence="5">480 uM for mycophenolate (when assaying glucuronidation at position 7)</KM>
        <KM evidence="4">1.2 uM for SN-38 (when assaying glucuronidation at position 10)</KM>
        <KM evidence="12">9.8 uM for SN-38 (when assaying glucuronidation at position 10)</KM>
        <Vmax evidence="13">20.4 pmol/min/mg enzyme for the formation of (E)-ferulic acid beta-D-glucuronate ester</Vmax>
        <Vmax evidence="10">94.2 pmol/min/mg enzyme for the formation of 17alpha-estradiol 3-O-(beta-D-glucuronate)</Vmax>
        <Vmax evidence="5">7140.0 pmol/min/mg enzyme for the formation of mycophenolate 7-O-glucuronide</Vmax>
        <Vmax evidence="4">8.0 pmol/min/mg enzyme for the formation of SN-38 glucuronide</Vmax>
        <Vmax evidence="12">5.0 pmol/min/mg enzyme for the formation of SN-38 glucuronide</Vmax>
        <Vmax evidence="8">140.0 pmol/min/mg enzyme for the formation of prunetin-5-O-(beta-D-glucuronoside)</Vmax>
        <text evidence="27">Some kinetic parameters were assessed using commercial enzymes, which may represent a mix of both active and inactive protein forms, and therefore modify the kinetic values.</text>
    </kinetics>
</comment>
<comment type="subunit">
    <text evidence="6 12 30">Homodimer (PubMed:17179145). Homooligomer (Probable). Interacts with UGT1A1, UGT1A3, UGT1A4, UGT1A6, UGT1A8, UGT1A9 and UGT1A10 to form heterodimers (PubMed:17179145). Isoform 1 interacts with isoform 2/i2 suggesting that oligomerization is involved in negative regulation of transferase activity by isoform 2. Isoform 1 also interacts with respective i2 isoforms of UGT1A1, UGT1A3, UGT1A4, UGT1A6, UGT1A8, UGT1A9 and UGT1A10 (PubMed:20610558).</text>
</comment>
<comment type="subcellular location">
    <subcellularLocation>
        <location evidence="25">Endoplasmic reticulum membrane</location>
        <topology evidence="1">Single-pass membrane protein</topology>
    </subcellularLocation>
</comment>
<comment type="alternative products">
    <event type="alternative splicing"/>
    <isoform>
        <id>Q9HAW7-1</id>
        <name>1</name>
        <name evidence="18">i1</name>
        <sequence type="displayed"/>
    </isoform>
    <isoform>
        <id>Q9HAW7-2</id>
        <name>2</name>
        <name evidence="18">i2</name>
        <name>UGT1A7s</name>
        <sequence type="described" ref="VSP_053963"/>
    </isoform>
</comment>
<comment type="tissue specificity">
    <text evidence="7 16">Liver and gastric tissue (PubMed:9271343). Isoform 1 and isoform 2 are expressed in esophagus. Neither isoform is expressed in liver, kidney, colon and small intestine (PubMed:18004212).</text>
</comment>
<comment type="polymorphism">
    <text evidence="2">There are four common allelic UGT1A7 variants which exhibit significant differences in catalytic activity towards 3-, 7-, and 9-hydroxy-benzo(a)pyrene. UGT1A7*3 exhibits a 5.8-fold lower relative Vmax compared to UGT1A7*1, whereas UGT1A7*2 and UGT1A7*4 have a 2.6- and 2.8-fold lower relative Vmax than UGT1A7*1, respectively, suggesting that these mutations confer slow glucuronidation phenotype.</text>
</comment>
<comment type="miscellaneous">
    <text evidence="7">UGT1A7 isoform is part of the UGT1A complex locus which displays alternative use of promoters, first exons and terminal exons. The locus is defined by 13 first exons, which are alternatively spliced to 3 other common exons and 2 alternative terminal exons 5. From the 27 possible mRNA isoforms, 9 produce functionally active polypeptides (UGT1A1, 1A3, 1A4, 1A5, 1A6, 1A7, 1A8, 1A9 and 1A10) called isoforms 1 (i1). Use of an alternative exon 5 (5b) as terminal exon is leading to 9 additional alternatively spliced products termed isoforms i2 and which lack transferase activity.</text>
</comment>
<comment type="similarity">
    <text evidence="22">Belongs to the UDP-glycosyltransferase family.</text>
</comment>
<accession>Q9HAW7</accession>
<accession>B8K293</accession>
<accession>O00473</accession>
<organism>
    <name type="scientific">Homo sapiens</name>
    <name type="common">Human</name>
    <dbReference type="NCBI Taxonomy" id="9606"/>
    <lineage>
        <taxon>Eukaryota</taxon>
        <taxon>Metazoa</taxon>
        <taxon>Chordata</taxon>
        <taxon>Craniata</taxon>
        <taxon>Vertebrata</taxon>
        <taxon>Euteleostomi</taxon>
        <taxon>Mammalia</taxon>
        <taxon>Eutheria</taxon>
        <taxon>Euarchontoglires</taxon>
        <taxon>Primates</taxon>
        <taxon>Haplorrhini</taxon>
        <taxon>Catarrhini</taxon>
        <taxon>Hominidae</taxon>
        <taxon>Homo</taxon>
    </lineage>
</organism>
<sequence length="530" mass="59819">MARAGWTGLLPLYVCLLLTCGFAKAGKLLVVPMDGSHWFTMQSVVEKLILRGHEVVVVMPEVSWQLGRSLNCTVKTYSTSYTLEDQDREFMVFADARWTAPLRSAFSLLTSSSNGIFDLFFSNCRSLFNDRKLVEYLKESCFDAVFLDPFDACGLIVAKYFSLPSVVFARGIFCHYLEEGAQCPAPLSYVPRLLLGFSDAMTFKERVWNHIMHLEEHLFCPYFFKNVLEIASEILQTPVTAYDLYSHTSIWLLRTDFVLEYPKPVMPNMIFIGGINCHQGKPVPMEFEAYINASGEHGIVVFSLGSMVSEIPEKKAMAIADALGKIPQTVLWRYTGTRPSNLANNTILVKWLPQNDLLGHPMTRAFITHAGSHGVYESICNGVPMVMMPLFGDQMDNAKRMETKGAGVTLNVLEMTSEDLENALKAVINDKSYKENIMRLSSLHKDRPVEPLDLAVFWVEFVMRHKGAPHLRPAAHDLTWYQYHSLDVIGFLLAVVLTVAFITFKCCAYGYRKCLGKKGRVKKAHKSKTH</sequence>
<dbReference type="EC" id="2.4.1.17" evidence="4 7 8 9 10 12 14"/>
<dbReference type="EMBL" id="U89507">
    <property type="protein sequence ID" value="AAB81536.1"/>
    <property type="molecule type" value="mRNA"/>
</dbReference>
<dbReference type="EMBL" id="AF297093">
    <property type="protein sequence ID" value="AAG30419.1"/>
    <property type="molecule type" value="Genomic_DNA"/>
</dbReference>
<dbReference type="EMBL" id="DQ383513">
    <property type="protein sequence ID" value="ABD42926.1"/>
    <property type="molecule type" value="mRNA"/>
</dbReference>
<dbReference type="EMBL" id="AC006985">
    <property type="status" value="NOT_ANNOTATED_CDS"/>
    <property type="molecule type" value="Genomic_DNA"/>
</dbReference>
<dbReference type="EMBL" id="AC114812">
    <property type="status" value="NOT_ANNOTATED_CDS"/>
    <property type="molecule type" value="Genomic_DNA"/>
</dbReference>
<dbReference type="CCDS" id="CCDS2506.1">
    <molecule id="Q9HAW7-1"/>
</dbReference>
<dbReference type="RefSeq" id="NP_061950.2">
    <molecule id="Q9HAW7-1"/>
    <property type="nucleotide sequence ID" value="NM_019077.2"/>
</dbReference>
<dbReference type="SMR" id="Q9HAW7"/>
<dbReference type="BioGRID" id="120055">
    <property type="interactions" value="66"/>
</dbReference>
<dbReference type="FunCoup" id="Q9HAW7">
    <property type="interactions" value="360"/>
</dbReference>
<dbReference type="IntAct" id="Q9HAW7">
    <property type="interactions" value="61"/>
</dbReference>
<dbReference type="STRING" id="9606.ENSP00000362525"/>
<dbReference type="BindingDB" id="Q9HAW7"/>
<dbReference type="ChEMBL" id="CHEMBL1743317"/>
<dbReference type="DrugBank" id="DB00714">
    <property type="generic name" value="Apomorphine"/>
</dbReference>
<dbReference type="DrugBank" id="DB09061">
    <property type="generic name" value="Cannabidiol"/>
</dbReference>
<dbReference type="DrugBank" id="DB14737">
    <property type="generic name" value="Cannabinol"/>
</dbReference>
<dbReference type="DrugBank" id="DB00564">
    <property type="generic name" value="Carbamazepine"/>
</dbReference>
<dbReference type="DrugBank" id="DB14635">
    <property type="generic name" value="Curcumin sulfate"/>
</dbReference>
<dbReference type="DrugBank" id="DB12243">
    <property type="generic name" value="Edaravone"/>
</dbReference>
<dbReference type="DrugBank" id="DB11979">
    <property type="generic name" value="Elagolix"/>
</dbReference>
<dbReference type="DrugBank" id="DB00783">
    <property type="generic name" value="Estradiol"/>
</dbReference>
<dbReference type="DrugBank" id="DB11796">
    <property type="generic name" value="Fostemsavir"/>
</dbReference>
<dbReference type="DrugBank" id="DB12471">
    <property type="generic name" value="Ibrexafungerp"/>
</dbReference>
<dbReference type="DrugBank" id="DB01026">
    <property type="generic name" value="Ketoconazole"/>
</dbReference>
<dbReference type="DrugBank" id="DB00555">
    <property type="generic name" value="Lamotrigine"/>
</dbReference>
<dbReference type="DrugBank" id="DB14009">
    <property type="generic name" value="Medical Cannabis"/>
</dbReference>
<dbReference type="DrugBank" id="DB05018">
    <property type="generic name" value="Migalastat"/>
</dbReference>
<dbReference type="DrugBank" id="DB00688">
    <property type="generic name" value="Mycophenolate mofetil"/>
</dbReference>
<dbReference type="DrugBank" id="DB01024">
    <property type="generic name" value="Mycophenolic acid"/>
</dbReference>
<dbReference type="DrugBank" id="DB00788">
    <property type="generic name" value="Naproxen"/>
</dbReference>
<dbReference type="DrugBank" id="DB09079">
    <property type="generic name" value="Nintedanib"/>
</dbReference>
<dbReference type="DrugBank" id="DB00960">
    <property type="generic name" value="Pindolol"/>
</dbReference>
<dbReference type="DrugBank" id="DB00794">
    <property type="generic name" value="Primidone"/>
</dbReference>
<dbReference type="DrugBank" id="DB00503">
    <property type="generic name" value="Ritonavir"/>
</dbReference>
<dbReference type="DrugBank" id="DB00871">
    <property type="generic name" value="Terbutaline"/>
</dbReference>
<dbReference type="DrugBank" id="DB00197">
    <property type="generic name" value="Troglitazone"/>
</dbReference>
<dbReference type="DrugBank" id="DB12255">
    <property type="generic name" value="Vadadustat"/>
</dbReference>
<dbReference type="DrugCentral" id="Q9HAW7"/>
<dbReference type="CAZy" id="GT1">
    <property type="family name" value="Glycosyltransferase Family 1"/>
</dbReference>
<dbReference type="GlyConnect" id="1879">
    <property type="glycosylation" value="2 N-Linked glycans (1 site)"/>
</dbReference>
<dbReference type="GlyCosmos" id="Q9HAW7">
    <property type="glycosylation" value="3 sites, 2 glycans"/>
</dbReference>
<dbReference type="GlyGen" id="Q9HAW7">
    <property type="glycosylation" value="4 sites, 2 N-linked glycans (1 site), 1 O-linked glycan (1 site)"/>
</dbReference>
<dbReference type="iPTMnet" id="Q9HAW7"/>
<dbReference type="PhosphoSitePlus" id="Q9HAW7"/>
<dbReference type="BioMuta" id="UGT1A7"/>
<dbReference type="DMDM" id="30173486"/>
<dbReference type="jPOST" id="Q9HAW7"/>
<dbReference type="MassIVE" id="Q9HAW7"/>
<dbReference type="PaxDb" id="9606-ENSP00000362525"/>
<dbReference type="PeptideAtlas" id="Q9HAW7"/>
<dbReference type="ProteomicsDB" id="81454">
    <molecule id="Q9HAW7-1"/>
</dbReference>
<dbReference type="Pumba" id="Q9HAW7"/>
<dbReference type="Antibodypedia" id="35223">
    <property type="antibodies" value="26 antibodies from 11 providers"/>
</dbReference>
<dbReference type="DNASU" id="54577"/>
<dbReference type="Ensembl" id="ENST00000373426.4">
    <molecule id="Q9HAW7-1"/>
    <property type="protein sequence ID" value="ENSP00000362525.3"/>
    <property type="gene ID" value="ENSG00000244122.3"/>
</dbReference>
<dbReference type="GeneID" id="54577"/>
<dbReference type="KEGG" id="hsa:54577"/>
<dbReference type="MANE-Select" id="ENST00000373426.4">
    <property type="protein sequence ID" value="ENSP00000362525.3"/>
    <property type="RefSeq nucleotide sequence ID" value="NM_019077.3"/>
    <property type="RefSeq protein sequence ID" value="NP_061950.2"/>
</dbReference>
<dbReference type="UCSC" id="uc002vut.4">
    <molecule id="Q9HAW7-1"/>
    <property type="organism name" value="human"/>
</dbReference>
<dbReference type="AGR" id="HGNC:12539"/>
<dbReference type="CTD" id="54577"/>
<dbReference type="DisGeNET" id="54577"/>
<dbReference type="GeneCards" id="UGT1A7"/>
<dbReference type="HGNC" id="HGNC:12539">
    <property type="gene designation" value="UGT1A7"/>
</dbReference>
<dbReference type="HPA" id="ENSG00000244122">
    <property type="expression patterns" value="Tissue enriched (esophagus)"/>
</dbReference>
<dbReference type="MalaCards" id="UGT1A7"/>
<dbReference type="MIM" id="191740">
    <property type="type" value="gene"/>
</dbReference>
<dbReference type="MIM" id="606432">
    <property type="type" value="gene"/>
</dbReference>
<dbReference type="neXtProt" id="NX_Q9HAW7"/>
<dbReference type="OpenTargets" id="ENSG00000244122"/>
<dbReference type="PharmGKB" id="PA37182"/>
<dbReference type="VEuPathDB" id="HostDB:ENSG00000244122"/>
<dbReference type="eggNOG" id="KOG1192">
    <property type="taxonomic scope" value="Eukaryota"/>
</dbReference>
<dbReference type="GeneTree" id="ENSGT00940000163976"/>
<dbReference type="HOGENOM" id="CLU_012949_3_1_1"/>
<dbReference type="InParanoid" id="Q9HAW7"/>
<dbReference type="OMA" id="VALTFKC"/>
<dbReference type="OrthoDB" id="5835829at2759"/>
<dbReference type="PAN-GO" id="Q9HAW7">
    <property type="GO annotations" value="4 GO annotations based on evolutionary models"/>
</dbReference>
<dbReference type="PhylomeDB" id="Q9HAW7"/>
<dbReference type="TreeFam" id="TF315472"/>
<dbReference type="BRENDA" id="2.4.1.17">
    <property type="organism ID" value="2681"/>
</dbReference>
<dbReference type="PathwayCommons" id="Q9HAW7"/>
<dbReference type="Reactome" id="R-HSA-156588">
    <property type="pathway name" value="Glucuronidation"/>
</dbReference>
<dbReference type="Reactome" id="R-HSA-9749641">
    <property type="pathway name" value="Aspirin ADME"/>
</dbReference>
<dbReference type="SABIO-RK" id="Q9HAW7"/>
<dbReference type="SignaLink" id="Q9HAW7"/>
<dbReference type="BioGRID-ORCS" id="54577">
    <property type="hits" value="27 hits in 956 CRISPR screens"/>
</dbReference>
<dbReference type="GeneWiki" id="UGT1A7_(gene)"/>
<dbReference type="GenomeRNAi" id="54577"/>
<dbReference type="Pharos" id="Q9HAW7">
    <property type="development level" value="Tbio"/>
</dbReference>
<dbReference type="PRO" id="PR:Q9HAW7"/>
<dbReference type="Proteomes" id="UP000005640">
    <property type="component" value="Chromosome 2"/>
</dbReference>
<dbReference type="RNAct" id="Q9HAW7">
    <property type="molecule type" value="protein"/>
</dbReference>
<dbReference type="Bgee" id="ENSG00000244122">
    <property type="expression patterns" value="Expressed in lower esophagus mucosa and 46 other cell types or tissues"/>
</dbReference>
<dbReference type="ExpressionAtlas" id="Q9HAW7">
    <property type="expression patterns" value="baseline and differential"/>
</dbReference>
<dbReference type="GO" id="GO:0005783">
    <property type="term" value="C:endoplasmic reticulum"/>
    <property type="evidence" value="ECO:0000314"/>
    <property type="project" value="UniProtKB"/>
</dbReference>
<dbReference type="GO" id="GO:0005789">
    <property type="term" value="C:endoplasmic reticulum membrane"/>
    <property type="evidence" value="ECO:0000303"/>
    <property type="project" value="BHF-UCL"/>
</dbReference>
<dbReference type="GO" id="GO:0019899">
    <property type="term" value="F:enzyme binding"/>
    <property type="evidence" value="ECO:0000353"/>
    <property type="project" value="BHF-UCL"/>
</dbReference>
<dbReference type="GO" id="GO:0004857">
    <property type="term" value="F:enzyme inhibitor activity"/>
    <property type="evidence" value="ECO:0000314"/>
    <property type="project" value="BHF-UCL"/>
</dbReference>
<dbReference type="GO" id="GO:0015020">
    <property type="term" value="F:glucuronosyltransferase activity"/>
    <property type="evidence" value="ECO:0000314"/>
    <property type="project" value="BHF-UCL"/>
</dbReference>
<dbReference type="GO" id="GO:0046982">
    <property type="term" value="F:protein heterodimerization activity"/>
    <property type="evidence" value="ECO:0000353"/>
    <property type="project" value="BHF-UCL"/>
</dbReference>
<dbReference type="GO" id="GO:0042803">
    <property type="term" value="F:protein homodimerization activity"/>
    <property type="evidence" value="ECO:0000314"/>
    <property type="project" value="UniProtKB"/>
</dbReference>
<dbReference type="GO" id="GO:0005080">
    <property type="term" value="F:protein kinase C binding"/>
    <property type="evidence" value="ECO:0000353"/>
    <property type="project" value="BHF-UCL"/>
</dbReference>
<dbReference type="GO" id="GO:0001972">
    <property type="term" value="F:retinoic acid binding"/>
    <property type="evidence" value="ECO:0000314"/>
    <property type="project" value="BHF-UCL"/>
</dbReference>
<dbReference type="GO" id="GO:0009804">
    <property type="term" value="P:coumarin metabolic process"/>
    <property type="evidence" value="ECO:0000305"/>
    <property type="project" value="BHF-UCL"/>
</dbReference>
<dbReference type="GO" id="GO:0008210">
    <property type="term" value="P:estrogen metabolic process"/>
    <property type="evidence" value="ECO:0000314"/>
    <property type="project" value="UniProtKB"/>
</dbReference>
<dbReference type="GO" id="GO:0006631">
    <property type="term" value="P:fatty acid metabolic process"/>
    <property type="evidence" value="ECO:0000314"/>
    <property type="project" value="BHF-UCL"/>
</dbReference>
<dbReference type="GO" id="GO:0051552">
    <property type="term" value="P:flavone metabolic process"/>
    <property type="evidence" value="ECO:0000305"/>
    <property type="project" value="BHF-UCL"/>
</dbReference>
<dbReference type="GO" id="GO:0009812">
    <property type="term" value="P:flavonoid metabolic process"/>
    <property type="evidence" value="ECO:0000314"/>
    <property type="project" value="BHF-UCL"/>
</dbReference>
<dbReference type="GO" id="GO:0001889">
    <property type="term" value="P:liver development"/>
    <property type="evidence" value="ECO:0000318"/>
    <property type="project" value="GO_Central"/>
</dbReference>
<dbReference type="GO" id="GO:0045922">
    <property type="term" value="P:negative regulation of fatty acid metabolic process"/>
    <property type="evidence" value="ECO:0000314"/>
    <property type="project" value="BHF-UCL"/>
</dbReference>
<dbReference type="GO" id="GO:0042573">
    <property type="term" value="P:retinoic acid metabolic process"/>
    <property type="evidence" value="ECO:0000305"/>
    <property type="project" value="BHF-UCL"/>
</dbReference>
<dbReference type="GO" id="GO:0009407">
    <property type="term" value="P:toxin catabolic process"/>
    <property type="evidence" value="ECO:0000314"/>
    <property type="project" value="BHF-UCL"/>
</dbReference>
<dbReference type="GO" id="GO:0042178">
    <property type="term" value="P:xenobiotic catabolic process"/>
    <property type="evidence" value="ECO:0000314"/>
    <property type="project" value="BHF-UCL"/>
</dbReference>
<dbReference type="GO" id="GO:0006805">
    <property type="term" value="P:xenobiotic metabolic process"/>
    <property type="evidence" value="ECO:0000314"/>
    <property type="project" value="BHF-UCL"/>
</dbReference>
<dbReference type="CDD" id="cd03784">
    <property type="entry name" value="GT1_Gtf-like"/>
    <property type="match status" value="1"/>
</dbReference>
<dbReference type="FunFam" id="3.40.50.2000:FF:000001">
    <property type="entry name" value="UDP-glucuronosyltransferase"/>
    <property type="match status" value="1"/>
</dbReference>
<dbReference type="FunFam" id="3.40.50.2000:FF:000092">
    <property type="entry name" value="UDP-glucuronosyltransferase"/>
    <property type="match status" value="1"/>
</dbReference>
<dbReference type="Gene3D" id="3.40.50.2000">
    <property type="entry name" value="Glycogen Phosphorylase B"/>
    <property type="match status" value="2"/>
</dbReference>
<dbReference type="InterPro" id="IPR050271">
    <property type="entry name" value="UDP-glycosyltransferase"/>
</dbReference>
<dbReference type="InterPro" id="IPR002213">
    <property type="entry name" value="UDP_glucos_trans"/>
</dbReference>
<dbReference type="InterPro" id="IPR035595">
    <property type="entry name" value="UDP_glycos_trans_CS"/>
</dbReference>
<dbReference type="PANTHER" id="PTHR48043">
    <property type="entry name" value="EG:EG0003.4 PROTEIN-RELATED"/>
    <property type="match status" value="1"/>
</dbReference>
<dbReference type="PANTHER" id="PTHR48043:SF161">
    <property type="entry name" value="UDP GLUCURONOSYLTRANSFERASE FAMILY 1 MEMBER A1"/>
    <property type="match status" value="1"/>
</dbReference>
<dbReference type="Pfam" id="PF00201">
    <property type="entry name" value="UDPGT"/>
    <property type="match status" value="1"/>
</dbReference>
<dbReference type="SUPFAM" id="SSF53756">
    <property type="entry name" value="UDP-Glycosyltransferase/glycogen phosphorylase"/>
    <property type="match status" value="1"/>
</dbReference>
<dbReference type="PROSITE" id="PS00375">
    <property type="entry name" value="UDPGT"/>
    <property type="match status" value="1"/>
</dbReference>
<reference key="1">
    <citation type="journal article" date="1997" name="Mol. Pharmacol.">
        <title>Differential expression of the UGT1A locus in human liver, biliary, and gastric tissue: identification of UGT1A7 and UGT1A10 transcripts in extrahepatic tissue.</title>
        <authorList>
            <person name="Strassburg C.P."/>
            <person name="Oldhafer K."/>
            <person name="Manns M.P."/>
            <person name="Tukey R.H."/>
        </authorList>
    </citation>
    <scope>NUCLEOTIDE SEQUENCE [MRNA]</scope>
    <scope>TISSUE SPECIFICITY</scope>
</reference>
<reference key="2">
    <citation type="journal article" date="2001" name="Pharmacogenetics">
        <title>Thirteen UDP-glucuronosyltransferase genes are encoded at the human UGT1 gene complex locus.</title>
        <authorList>
            <person name="Gong Q.H."/>
            <person name="Cho J.W."/>
            <person name="Huang T."/>
            <person name="Potter C."/>
            <person name="Gholami N."/>
            <person name="Basu N.K."/>
            <person name="Kubota S."/>
            <person name="Carvalho S."/>
            <person name="Pennington M.W."/>
            <person name="Owens I.S."/>
            <person name="Popescu N.C."/>
        </authorList>
    </citation>
    <scope>NUCLEOTIDE SEQUENCE [GENOMIC DNA]</scope>
    <scope>VARIANTS LYS-129; LYS-131 AND ARG-208</scope>
</reference>
<reference key="3">
    <citation type="submission" date="2006-01" db="EMBL/GenBank/DDBJ databases">
        <authorList>
            <person name="Guillemette C."/>
            <person name="Levesque E."/>
            <person name="Girard H."/>
            <person name="Bernard O."/>
        </authorList>
    </citation>
    <scope>NUCLEOTIDE SEQUENCE [MRNA] (ISOFORM 2)</scope>
    <scope>VARIANTS LYS-129 AND LYS-131</scope>
</reference>
<reference key="4">
    <citation type="journal article" date="2005" name="Nature">
        <title>Generation and annotation of the DNA sequences of human chromosomes 2 and 4.</title>
        <authorList>
            <person name="Hillier L.W."/>
            <person name="Graves T.A."/>
            <person name="Fulton R.S."/>
            <person name="Fulton L.A."/>
            <person name="Pepin K.H."/>
            <person name="Minx P."/>
            <person name="Wagner-McPherson C."/>
            <person name="Layman D."/>
            <person name="Wylie K."/>
            <person name="Sekhon M."/>
            <person name="Becker M.C."/>
            <person name="Fewell G.A."/>
            <person name="Delehaunty K.D."/>
            <person name="Miner T.L."/>
            <person name="Nash W.E."/>
            <person name="Kremitzki C."/>
            <person name="Oddy L."/>
            <person name="Du H."/>
            <person name="Sun H."/>
            <person name="Bradshaw-Cordum H."/>
            <person name="Ali J."/>
            <person name="Carter J."/>
            <person name="Cordes M."/>
            <person name="Harris A."/>
            <person name="Isak A."/>
            <person name="van Brunt A."/>
            <person name="Nguyen C."/>
            <person name="Du F."/>
            <person name="Courtney L."/>
            <person name="Kalicki J."/>
            <person name="Ozersky P."/>
            <person name="Abbott S."/>
            <person name="Armstrong J."/>
            <person name="Belter E.A."/>
            <person name="Caruso L."/>
            <person name="Cedroni M."/>
            <person name="Cotton M."/>
            <person name="Davidson T."/>
            <person name="Desai A."/>
            <person name="Elliott G."/>
            <person name="Erb T."/>
            <person name="Fronick C."/>
            <person name="Gaige T."/>
            <person name="Haakenson W."/>
            <person name="Haglund K."/>
            <person name="Holmes A."/>
            <person name="Harkins R."/>
            <person name="Kim K."/>
            <person name="Kruchowski S.S."/>
            <person name="Strong C.M."/>
            <person name="Grewal N."/>
            <person name="Goyea E."/>
            <person name="Hou S."/>
            <person name="Levy A."/>
            <person name="Martinka S."/>
            <person name="Mead K."/>
            <person name="McLellan M.D."/>
            <person name="Meyer R."/>
            <person name="Randall-Maher J."/>
            <person name="Tomlinson C."/>
            <person name="Dauphin-Kohlberg S."/>
            <person name="Kozlowicz-Reilly A."/>
            <person name="Shah N."/>
            <person name="Swearengen-Shahid S."/>
            <person name="Snider J."/>
            <person name="Strong J.T."/>
            <person name="Thompson J."/>
            <person name="Yoakum M."/>
            <person name="Leonard S."/>
            <person name="Pearman C."/>
            <person name="Trani L."/>
            <person name="Radionenko M."/>
            <person name="Waligorski J.E."/>
            <person name="Wang C."/>
            <person name="Rock S.M."/>
            <person name="Tin-Wollam A.-M."/>
            <person name="Maupin R."/>
            <person name="Latreille P."/>
            <person name="Wendl M.C."/>
            <person name="Yang S.-P."/>
            <person name="Pohl C."/>
            <person name="Wallis J.W."/>
            <person name="Spieth J."/>
            <person name="Bieri T.A."/>
            <person name="Berkowicz N."/>
            <person name="Nelson J.O."/>
            <person name="Osborne J."/>
            <person name="Ding L."/>
            <person name="Meyer R."/>
            <person name="Sabo A."/>
            <person name="Shotland Y."/>
            <person name="Sinha P."/>
            <person name="Wohldmann P.E."/>
            <person name="Cook L.L."/>
            <person name="Hickenbotham M.T."/>
            <person name="Eldred J."/>
            <person name="Williams D."/>
            <person name="Jones T.A."/>
            <person name="She X."/>
            <person name="Ciccarelli F.D."/>
            <person name="Izaurralde E."/>
            <person name="Taylor J."/>
            <person name="Schmutz J."/>
            <person name="Myers R.M."/>
            <person name="Cox D.R."/>
            <person name="Huang X."/>
            <person name="McPherson J.D."/>
            <person name="Mardis E.R."/>
            <person name="Clifton S.W."/>
            <person name="Warren W.C."/>
            <person name="Chinwalla A.T."/>
            <person name="Eddy S.R."/>
            <person name="Marra M.A."/>
            <person name="Ovcharenko I."/>
            <person name="Furey T.S."/>
            <person name="Miller W."/>
            <person name="Eichler E.E."/>
            <person name="Bork P."/>
            <person name="Suyama M."/>
            <person name="Torrents D."/>
            <person name="Waterston R.H."/>
            <person name="Wilson R.K."/>
        </authorList>
    </citation>
    <scope>NUCLEOTIDE SEQUENCE [LARGE SCALE GENOMIC DNA]</scope>
</reference>
<reference key="5">
    <citation type="journal article" date="2002" name="Mol. Pharmacol.">
        <title>Common human UGT1A polymorphisms and the altered metabolism of irinotecan active metabolite 7-ethyl-10-hydroxycamptothecin (SN-38).</title>
        <authorList>
            <person name="Gagne J.F."/>
            <person name="Montminy V."/>
            <person name="Belanger P."/>
            <person name="Journault K."/>
            <person name="Gaucher G."/>
            <person name="Guillemette C."/>
        </authorList>
    </citation>
    <scope>FUNCTION (ISOFORM 1)</scope>
    <scope>CATALYTIC ACTIVITY</scope>
    <scope>BIOPHYSICOCHEMICAL PROPERTIES</scope>
</reference>
<reference key="6">
    <citation type="journal article" date="2005" name="Drug Metab. Dispos.">
        <title>Identification of the UDP-glucuronosyltransferase isoforms involved in mycophenolic acid phase II metabolism.</title>
        <authorList>
            <person name="Picard N."/>
            <person name="Ratanasavanh D."/>
            <person name="Premaud A."/>
            <person name="Le Meur Y."/>
            <person name="Marquet P."/>
        </authorList>
    </citation>
    <scope>FUNCTION</scope>
    <scope>CATALYTIC ACTIVITY</scope>
    <scope>BIOPHYSICOCHEMICAL PROPERTIES</scope>
</reference>
<reference key="7">
    <citation type="journal article" date="2007" name="J. Biol. Chem.">
        <title>Oligomerization of the UDP-glucuronosyltransferase 1A proteins: homo- and heterodimerization analysis by fluorescence resonance energy transfer and co-immunoprecipitation.</title>
        <authorList>
            <person name="Operana T.N."/>
            <person name="Tukey R.H."/>
        </authorList>
    </citation>
    <scope>SUBUNIT</scope>
    <scope>SUBCELLULAR LOCATION</scope>
</reference>
<reference key="8">
    <citation type="journal article" date="2007" name="Mol. Pharm.">
        <title>Disposition of flavonoids via enteric recycling: enzyme stability affects characterization of prunetin glucuronidation across species, organs, and UGT isoforms.</title>
        <authorList>
            <person name="Joseph T.B."/>
            <person name="Wang S.W."/>
            <person name="Liu X."/>
            <person name="Kulkarni K.H."/>
            <person name="Wang J."/>
            <person name="Xu H."/>
            <person name="Hu M."/>
        </authorList>
    </citation>
    <scope>FUNCTION (ISOFORM 1)</scope>
    <scope>CATALYTIC ACTIVITY</scope>
    <scope>BIOPHYSICOCHEMICAL PROPERTIES</scope>
</reference>
<reference key="9">
    <citation type="journal article" date="2007" name="Pharmacogenet. Genomics">
        <title>Genetic diversity at the UGT1 locus is amplified by a novel 3' alternative splicing mechanism leading to nine additional UGT1A proteins that act as regulators of glucuronidation activity.</title>
        <authorList>
            <person name="Girard H."/>
            <person name="Levesque E."/>
            <person name="Bellemare J."/>
            <person name="Journault K."/>
            <person name="Caillier B."/>
            <person name="Guillemette C."/>
        </authorList>
    </citation>
    <scope>FUNCTION (ISOFORMS 1 AND 2)</scope>
    <scope>ALTERNATIVE SPLICING</scope>
    <scope>CATALYTIC ACTIVITY</scope>
    <scope>TISSUE SPECIFICITY</scope>
</reference>
<reference key="10">
    <citation type="journal article" date="2008" name="Biochem. Pharmacol.">
        <title>The human UDP-glucuronosyltransferase UGT1A3 is highly selective towards N2 in the tetrazole ring of losartan, candesartan, and zolarsartan.</title>
        <authorList>
            <person name="Alonen A."/>
            <person name="Finel M."/>
            <person name="Kostiainen R."/>
        </authorList>
    </citation>
    <scope>FUNCTION (ISOFORM 1)</scope>
    <scope>CATALYTIC ACTIVITY</scope>
</reference>
<reference key="11">
    <citation type="journal article" date="2008" name="Drug Metab. Dispos.">
        <title>The configuration of the 17-hydroxy group variably influences the glucuronidation of beta-estradiol and epiestradiol by human UDP-glucuronosyltransferases.</title>
        <authorList>
            <person name="Itaeaho K."/>
            <person name="Mackenzie P.I."/>
            <person name="Ikushiro S."/>
            <person name="Miners J.O."/>
            <person name="Finel M."/>
        </authorList>
    </citation>
    <scope>FUNCTION (ISOFORM 1)</scope>
    <scope>CATALYTIC ACTIVITY</scope>
    <scope>BIOPHYSICOCHEMICAL PROPERTIES</scope>
</reference>
<reference key="12">
    <citation type="journal article" date="2010" name="Drug Metab. Dispos.">
        <title>Alternatively spliced products of the UGT1A gene interact with the enzymatically active proteins to inhibit glucuronosyltransferase activity in vitro.</title>
        <authorList>
            <person name="Bellemare J."/>
            <person name="Rouleau M."/>
            <person name="Girard H."/>
            <person name="Harvey M."/>
            <person name="Guillemette C."/>
        </authorList>
    </citation>
    <scope>FUNCTION (ISOFORM 2)</scope>
    <scope>CATALYTIC ACTIVITY</scope>
    <scope>SUBUNIT</scope>
</reference>
<reference key="13">
    <citation type="journal article" date="2011" name="Drug Metab. Pharmacokinet.">
        <title>Identification of the human UDP-glucuronosyltransferase isoforms involved in the glucuronidation of the phytochemical ferulic acid.</title>
        <authorList>
            <person name="Li X."/>
            <person name="Shang L."/>
            <person name="Wu Y."/>
            <person name="Abbas S."/>
            <person name="Li D."/>
            <person name="Netter P."/>
            <person name="Ouzzine M."/>
            <person name="Wang H."/>
            <person name="Magdalou J."/>
        </authorList>
    </citation>
    <scope>FUNCTION</scope>
    <scope>CATALYTIC ACTIVITY</scope>
    <scope>BIOPHYSICOCHEMICAL PROPERTIES</scope>
</reference>
<reference key="14">
    <citation type="journal article" date="2013" name="Drug Metab. Dispos.">
        <title>The relative protein abundance of UGT1A alternative splice variants as a key determinant of glucuronidation activity in vitro.</title>
        <authorList>
            <person name="Rouleau M."/>
            <person name="Roberge J."/>
            <person name="Falardeau S.A."/>
            <person name="Villeneuve L."/>
            <person name="Guillemette C."/>
        </authorList>
    </citation>
    <scope>FUNCTION</scope>
    <scope>SUBUNIT</scope>
</reference>
<reference key="15">
    <citation type="journal article" date="2024" name="Redox Biol.">
        <title>Identification of novel F2-isoprostane metabolites by specific UDP-glucuronosyltransferases.</title>
        <authorList>
            <person name="Milne G.L."/>
            <person name="Nogueira M.S."/>
            <person name="Gao B."/>
            <person name="Sanchez S.C."/>
            <person name="Amin W."/>
            <person name="Thomas S."/>
            <person name="Oger C."/>
            <person name="Galano J.M."/>
            <person name="Murff H.J."/>
            <person name="Yang G."/>
            <person name="Durand T."/>
        </authorList>
    </citation>
    <scope>FUNCTION</scope>
    <scope>CATALYTIC ACTIVITY</scope>
</reference>
<reference key="16">
    <citation type="journal article" date="2000" name="Pharmacogenetics">
        <title>Structural heterogeneity at the UDP-glucuronosyltransferase 1 locus: functional consequences of three novel missense mutations in the human UGT1A7 gene.</title>
        <authorList>
            <person name="Guillemette C."/>
            <person name="Ritter J.K."/>
            <person name="Auyeung D.J."/>
            <person name="Kessler F.K."/>
            <person name="Housman D.E."/>
        </authorList>
    </citation>
    <scope>VARIANTS LYS-129; LYS-131 AND ARG-208</scope>
    <scope>CHARACTERIZATION OF ALLELES</scope>
</reference>
<reference key="17">
    <citation type="journal article" date="2009" name="Hum. Mutat.">
        <title>Analysis of inherited genetic variations at the UGT1 locus in the French-Canadian population.</title>
        <authorList>
            <person name="Menard V."/>
            <person name="Girard H."/>
            <person name="Harvey M."/>
            <person name="Perusse L."/>
            <person name="Guillemette C."/>
        </authorList>
    </citation>
    <scope>VARIANTS LYS-129; LYS-131 AND ARG-208</scope>
</reference>
<protein>
    <recommendedName>
        <fullName evidence="19">UDP-glucuronosyltransferase 1A7</fullName>
        <shortName evidence="20">UGT1A7</shortName>
        <ecNumber evidence="4 7 8 9 10 12 14">2.4.1.17</ecNumber>
    </recommendedName>
    <alternativeName>
        <fullName>UDP-glucuronosyltransferase 1-7</fullName>
        <shortName>UDPGT 1-7</shortName>
        <shortName>UGT1*7</shortName>
        <shortName>UGT1-07</shortName>
        <shortName>UGT1.7</shortName>
    </alternativeName>
    <alternativeName>
        <fullName>UDP-glucuronosyltransferase 1-G</fullName>
        <shortName>UGT-1G</shortName>
        <shortName>UGT1G</shortName>
    </alternativeName>
</protein>
<evidence type="ECO:0000255" key="1"/>
<evidence type="ECO:0000269" key="2">
    <source>
    </source>
</evidence>
<evidence type="ECO:0000269" key="3">
    <source>
    </source>
</evidence>
<evidence type="ECO:0000269" key="4">
    <source>
    </source>
</evidence>
<evidence type="ECO:0000269" key="5">
    <source>
    </source>
</evidence>
<evidence type="ECO:0000269" key="6">
    <source>
    </source>
</evidence>
<evidence type="ECO:0000269" key="7">
    <source>
    </source>
</evidence>
<evidence type="ECO:0000269" key="8">
    <source>
    </source>
</evidence>
<evidence type="ECO:0000269" key="9">
    <source>
    </source>
</evidence>
<evidence type="ECO:0000269" key="10">
    <source>
    </source>
</evidence>
<evidence type="ECO:0000269" key="11">
    <source>
    </source>
</evidence>
<evidence type="ECO:0000269" key="12">
    <source>
    </source>
</evidence>
<evidence type="ECO:0000269" key="13">
    <source>
    </source>
</evidence>
<evidence type="ECO:0000269" key="14">
    <source>
    </source>
</evidence>
<evidence type="ECO:0000269" key="15">
    <source>
    </source>
</evidence>
<evidence type="ECO:0000269" key="16">
    <source>
    </source>
</evidence>
<evidence type="ECO:0000269" key="17">
    <source ref="3"/>
</evidence>
<evidence type="ECO:0000303" key="18">
    <source>
    </source>
</evidence>
<evidence type="ECO:0000303" key="19">
    <source>
    </source>
</evidence>
<evidence type="ECO:0000303" key="20">
    <source>
    </source>
</evidence>
<evidence type="ECO:0000303" key="21">
    <source ref="3"/>
</evidence>
<evidence type="ECO:0000305" key="22"/>
<evidence type="ECO:0000305" key="23">
    <source>
    </source>
</evidence>
<evidence type="ECO:0000305" key="24">
    <source>
    </source>
</evidence>
<evidence type="ECO:0000305" key="25">
    <source>
    </source>
</evidence>
<evidence type="ECO:0000305" key="26">
    <source>
    </source>
</evidence>
<evidence type="ECO:0000305" key="27">
    <source>
    </source>
</evidence>
<evidence type="ECO:0000305" key="28">
    <source>
    </source>
</evidence>
<evidence type="ECO:0000305" key="29">
    <source>
    </source>
</evidence>
<evidence type="ECO:0000305" key="30">
    <source>
    </source>
</evidence>
<evidence type="ECO:0000305" key="31">
    <source>
    </source>
</evidence>
<evidence type="ECO:0000305" key="32">
    <source>
    </source>
</evidence>
<evidence type="ECO:0000305" key="33">
    <source>
    </source>
</evidence>
<evidence type="ECO:0000312" key="34">
    <source>
        <dbReference type="HGNC" id="HGNC:12539"/>
    </source>
</evidence>
<name>UD17_HUMAN</name>
<feature type="signal peptide" evidence="1">
    <location>
        <begin position="1"/>
        <end position="25"/>
    </location>
</feature>
<feature type="chain" id="PRO_0000036006" description="UDP-glucuronosyltransferase 1A7">
    <location>
        <begin position="26"/>
        <end position="530"/>
    </location>
</feature>
<feature type="transmembrane region" description="Helical" evidence="1">
    <location>
        <begin position="488"/>
        <end position="504"/>
    </location>
</feature>
<feature type="glycosylation site" description="N-linked (GlcNAc...) asparagine" evidence="1">
    <location>
        <position position="71"/>
    </location>
</feature>
<feature type="glycosylation site" description="N-linked (GlcNAc...) asparagine" evidence="1">
    <location>
        <position position="292"/>
    </location>
</feature>
<feature type="glycosylation site" description="N-linked (GlcNAc...) asparagine" evidence="1">
    <location>
        <position position="344"/>
    </location>
</feature>
<feature type="splice variant" id="VSP_053963" description="In isoform 2." evidence="21">
    <original>SYKENIMRLSSLHKDRPVEPLDLAVFWVEFVMRHKGAPHLRPAAHDLTWYQYHSLDVIGFLLAVVLTVAFITFKCCAYGYRKCLGKKGRVKKAHKSKTH</original>
    <variation>RKKQQSGRQM</variation>
    <location>
        <begin position="432"/>
        <end position="530"/>
    </location>
</feature>
<feature type="sequence variant" id="VAR_015556" description="In allele UGT1A7*2 and allele UGT1A7*3; dbSNP:rs17868323." evidence="2 3 11 17">
    <original>N</original>
    <variation>K</variation>
    <location>
        <position position="129"/>
    </location>
</feature>
<feature type="sequence variant" id="VAR_015557" description="In allele UGT1A7*2 and allele UGT1A7*3; dbSNP:rs386656364." evidence="2 3 11 17">
    <original>R</original>
    <variation>K</variation>
    <location>
        <position position="131"/>
    </location>
</feature>
<feature type="sequence variant" id="VAR_052462" description="In dbSNP:rs17868324.">
    <original>R</original>
    <variation>Q</variation>
    <location>
        <position position="131"/>
    </location>
</feature>
<feature type="sequence variant" id="VAR_015558" description="In allele UGT1A7*3 and allele UGT1A7*4; dbSNP:rs11692021." evidence="2 3 11">
    <original>W</original>
    <variation>R</variation>
    <location>
        <position position="208"/>
    </location>
</feature>
<feature type="sequence conflict" description="In Ref. 1; AAB81536." evidence="22" ref="1">
    <original>V</original>
    <variation>A</variation>
    <location>
        <position position="412"/>
    </location>
</feature>
<feature type="sequence conflict" description="In Ref. 1; AAB81536." evidence="22" ref="1">
    <original>Y</original>
    <variation>F</variation>
    <location>
        <position position="433"/>
    </location>
</feature>
<gene>
    <name evidence="34" type="primary">UGT1A7</name>
    <name type="synonym">GNT1</name>
    <name type="synonym">UGT1</name>
</gene>